<organism>
    <name type="scientific">Dechloromonas aromatica (strain RCB)</name>
    <dbReference type="NCBI Taxonomy" id="159087"/>
    <lineage>
        <taxon>Bacteria</taxon>
        <taxon>Pseudomonadati</taxon>
        <taxon>Pseudomonadota</taxon>
        <taxon>Betaproteobacteria</taxon>
        <taxon>Rhodocyclales</taxon>
        <taxon>Azonexaceae</taxon>
        <taxon>Dechloromonas</taxon>
    </lineage>
</organism>
<reference key="1">
    <citation type="journal article" date="2009" name="BMC Genomics">
        <title>Metabolic analysis of the soil microbe Dechloromonas aromatica str. RCB: indications of a surprisingly complex life-style and cryptic anaerobic pathways for aromatic degradation.</title>
        <authorList>
            <person name="Salinero K.K."/>
            <person name="Keller K."/>
            <person name="Feil W.S."/>
            <person name="Feil H."/>
            <person name="Trong S."/>
            <person name="Di Bartolo G."/>
            <person name="Lapidus A."/>
        </authorList>
    </citation>
    <scope>NUCLEOTIDE SEQUENCE [LARGE SCALE GENOMIC DNA]</scope>
    <source>
        <strain>RCB</strain>
    </source>
</reference>
<name>TYSY_DECAR</name>
<feature type="chain" id="PRO_1000000590" description="Thymidylate synthase">
    <location>
        <begin position="1"/>
        <end position="264"/>
    </location>
</feature>
<feature type="active site" description="Nucleophile" evidence="1">
    <location>
        <position position="146"/>
    </location>
</feature>
<feature type="binding site" description="in other chain" evidence="1">
    <location>
        <position position="21"/>
    </location>
    <ligand>
        <name>dUMP</name>
        <dbReference type="ChEBI" id="CHEBI:246422"/>
        <note>ligand shared between dimeric partners</note>
    </ligand>
</feature>
<feature type="binding site" evidence="1">
    <location>
        <position position="51"/>
    </location>
    <ligand>
        <name>(6R)-5,10-methylene-5,6,7,8-tetrahydrofolate</name>
        <dbReference type="ChEBI" id="CHEBI:15636"/>
    </ligand>
</feature>
<feature type="binding site" evidence="1">
    <location>
        <begin position="126"/>
        <end position="127"/>
    </location>
    <ligand>
        <name>dUMP</name>
        <dbReference type="ChEBI" id="CHEBI:246422"/>
        <note>ligand shared between dimeric partners</note>
    </ligand>
</feature>
<feature type="binding site" description="in other chain" evidence="1">
    <location>
        <begin position="166"/>
        <end position="169"/>
    </location>
    <ligand>
        <name>dUMP</name>
        <dbReference type="ChEBI" id="CHEBI:246422"/>
        <note>ligand shared between dimeric partners</note>
    </ligand>
</feature>
<feature type="binding site" evidence="1">
    <location>
        <position position="169"/>
    </location>
    <ligand>
        <name>(6R)-5,10-methylene-5,6,7,8-tetrahydrofolate</name>
        <dbReference type="ChEBI" id="CHEBI:15636"/>
    </ligand>
</feature>
<feature type="binding site" description="in other chain" evidence="1">
    <location>
        <position position="177"/>
    </location>
    <ligand>
        <name>dUMP</name>
        <dbReference type="ChEBI" id="CHEBI:246422"/>
        <note>ligand shared between dimeric partners</note>
    </ligand>
</feature>
<feature type="binding site" description="in other chain" evidence="1">
    <location>
        <begin position="207"/>
        <end position="209"/>
    </location>
    <ligand>
        <name>dUMP</name>
        <dbReference type="ChEBI" id="CHEBI:246422"/>
        <note>ligand shared between dimeric partners</note>
    </ligand>
</feature>
<feature type="binding site" evidence="1">
    <location>
        <position position="263"/>
    </location>
    <ligand>
        <name>(6R)-5,10-methylene-5,6,7,8-tetrahydrofolate</name>
        <dbReference type="ChEBI" id="CHEBI:15636"/>
    </ligand>
</feature>
<evidence type="ECO:0000255" key="1">
    <source>
        <dbReference type="HAMAP-Rule" id="MF_00008"/>
    </source>
</evidence>
<keyword id="KW-0963">Cytoplasm</keyword>
<keyword id="KW-0489">Methyltransferase</keyword>
<keyword id="KW-0545">Nucleotide biosynthesis</keyword>
<keyword id="KW-0808">Transferase</keyword>
<sequence length="264" mass="30507">MQPYLDLMRHVLDNGNDKSDRTGTGTRSVFGWQMRFDLSQGFPVMTTKKLHLKSIIHELLWFIQGDTNIKYLQENGVKIWDEWADENGDLGPVYGKQWRRWETPDGRVIDQITQLVNSLKNNPDSRRHIVSAWNPGDVDNMALPPCHCLFQFYVANGKLSCQLYQRSADIFLGVPFNIASYALFTMMLAQVCGYQPGEFVHTFGDAHLYSNHFEQAKLQLSRDTRPLPTMWINPEVKDLFAFRFEDFRLEGYDPHPHIPAPVAV</sequence>
<dbReference type="EC" id="2.1.1.45" evidence="1"/>
<dbReference type="EMBL" id="CP000089">
    <property type="protein sequence ID" value="AAZ45350.1"/>
    <property type="molecule type" value="Genomic_DNA"/>
</dbReference>
<dbReference type="SMR" id="Q47II1"/>
<dbReference type="STRING" id="159087.Daro_0593"/>
<dbReference type="KEGG" id="dar:Daro_0593"/>
<dbReference type="eggNOG" id="COG0207">
    <property type="taxonomic scope" value="Bacteria"/>
</dbReference>
<dbReference type="HOGENOM" id="CLU_021669_0_0_4"/>
<dbReference type="OrthoDB" id="9774633at2"/>
<dbReference type="UniPathway" id="UPA00575"/>
<dbReference type="GO" id="GO:0005829">
    <property type="term" value="C:cytosol"/>
    <property type="evidence" value="ECO:0007669"/>
    <property type="project" value="TreeGrafter"/>
</dbReference>
<dbReference type="GO" id="GO:0004799">
    <property type="term" value="F:thymidylate synthase activity"/>
    <property type="evidence" value="ECO:0007669"/>
    <property type="project" value="UniProtKB-UniRule"/>
</dbReference>
<dbReference type="GO" id="GO:0006231">
    <property type="term" value="P:dTMP biosynthetic process"/>
    <property type="evidence" value="ECO:0007669"/>
    <property type="project" value="UniProtKB-UniRule"/>
</dbReference>
<dbReference type="GO" id="GO:0006235">
    <property type="term" value="P:dTTP biosynthetic process"/>
    <property type="evidence" value="ECO:0007669"/>
    <property type="project" value="UniProtKB-UniRule"/>
</dbReference>
<dbReference type="GO" id="GO:0032259">
    <property type="term" value="P:methylation"/>
    <property type="evidence" value="ECO:0007669"/>
    <property type="project" value="UniProtKB-KW"/>
</dbReference>
<dbReference type="CDD" id="cd00351">
    <property type="entry name" value="TS_Pyrimidine_HMase"/>
    <property type="match status" value="1"/>
</dbReference>
<dbReference type="FunFam" id="3.30.572.10:FF:000001">
    <property type="entry name" value="Thymidylate synthase"/>
    <property type="match status" value="1"/>
</dbReference>
<dbReference type="Gene3D" id="3.30.572.10">
    <property type="entry name" value="Thymidylate synthase/dCMP hydroxymethylase domain"/>
    <property type="match status" value="1"/>
</dbReference>
<dbReference type="HAMAP" id="MF_00008">
    <property type="entry name" value="Thymidy_synth_bact"/>
    <property type="match status" value="1"/>
</dbReference>
<dbReference type="InterPro" id="IPR045097">
    <property type="entry name" value="Thymidate_synth/dCMP_Mease"/>
</dbReference>
<dbReference type="InterPro" id="IPR023451">
    <property type="entry name" value="Thymidate_synth/dCMP_Mease_dom"/>
</dbReference>
<dbReference type="InterPro" id="IPR036926">
    <property type="entry name" value="Thymidate_synth/dCMP_Mease_sf"/>
</dbReference>
<dbReference type="InterPro" id="IPR000398">
    <property type="entry name" value="Thymidylate_synthase"/>
</dbReference>
<dbReference type="InterPro" id="IPR020940">
    <property type="entry name" value="Thymidylate_synthase_AS"/>
</dbReference>
<dbReference type="NCBIfam" id="NF002497">
    <property type="entry name" value="PRK01827.1-3"/>
    <property type="match status" value="1"/>
</dbReference>
<dbReference type="NCBIfam" id="NF002499">
    <property type="entry name" value="PRK01827.1-5"/>
    <property type="match status" value="1"/>
</dbReference>
<dbReference type="NCBIfam" id="TIGR03284">
    <property type="entry name" value="thym_sym"/>
    <property type="match status" value="2"/>
</dbReference>
<dbReference type="PANTHER" id="PTHR11548:SF9">
    <property type="entry name" value="THYMIDYLATE SYNTHASE"/>
    <property type="match status" value="1"/>
</dbReference>
<dbReference type="PANTHER" id="PTHR11548">
    <property type="entry name" value="THYMIDYLATE SYNTHASE 1"/>
    <property type="match status" value="1"/>
</dbReference>
<dbReference type="Pfam" id="PF00303">
    <property type="entry name" value="Thymidylat_synt"/>
    <property type="match status" value="1"/>
</dbReference>
<dbReference type="PRINTS" id="PR00108">
    <property type="entry name" value="THYMDSNTHASE"/>
</dbReference>
<dbReference type="SUPFAM" id="SSF55831">
    <property type="entry name" value="Thymidylate synthase/dCMP hydroxymethylase"/>
    <property type="match status" value="1"/>
</dbReference>
<dbReference type="PROSITE" id="PS00091">
    <property type="entry name" value="THYMIDYLATE_SYNTHASE"/>
    <property type="match status" value="1"/>
</dbReference>
<gene>
    <name evidence="1" type="primary">thyA</name>
    <name type="ordered locus">Daro_0593</name>
</gene>
<accession>Q47II1</accession>
<comment type="function">
    <text evidence="1">Catalyzes the reductive methylation of 2'-deoxyuridine-5'-monophosphate (dUMP) to 2'-deoxythymidine-5'-monophosphate (dTMP) while utilizing 5,10-methylenetetrahydrofolate (mTHF) as the methyl donor and reductant in the reaction, yielding dihydrofolate (DHF) as a by-product. This enzymatic reaction provides an intracellular de novo source of dTMP, an essential precursor for DNA biosynthesis.</text>
</comment>
<comment type="catalytic activity">
    <reaction evidence="1">
        <text>dUMP + (6R)-5,10-methylene-5,6,7,8-tetrahydrofolate = 7,8-dihydrofolate + dTMP</text>
        <dbReference type="Rhea" id="RHEA:12104"/>
        <dbReference type="ChEBI" id="CHEBI:15636"/>
        <dbReference type="ChEBI" id="CHEBI:57451"/>
        <dbReference type="ChEBI" id="CHEBI:63528"/>
        <dbReference type="ChEBI" id="CHEBI:246422"/>
        <dbReference type="EC" id="2.1.1.45"/>
    </reaction>
</comment>
<comment type="pathway">
    <text evidence="1">Pyrimidine metabolism; dTTP biosynthesis.</text>
</comment>
<comment type="subunit">
    <text evidence="1">Homodimer.</text>
</comment>
<comment type="subcellular location">
    <subcellularLocation>
        <location evidence="1">Cytoplasm</location>
    </subcellularLocation>
</comment>
<comment type="similarity">
    <text evidence="1">Belongs to the thymidylate synthase family. Bacterial-type ThyA subfamily.</text>
</comment>
<proteinExistence type="inferred from homology"/>
<protein>
    <recommendedName>
        <fullName evidence="1">Thymidylate synthase</fullName>
        <shortName evidence="1">TS</shortName>
        <shortName evidence="1">TSase</shortName>
        <ecNumber evidence="1">2.1.1.45</ecNumber>
    </recommendedName>
</protein>